<comment type="similarity">
    <text evidence="1">Belongs to the UPF0735 family.</text>
</comment>
<sequence>MGEDGKLYIVREEILSDSIKKTIKVKELLESGKAKTINEAVKQVGISRSAFYKYRDYVFPFSKFSKGKIITFSMVLEHMPGVLSSILDVVAKERGNVVTINQSIPSMGVASVTISIDTQYMEISIEDFIEELSKQPGVRKIEVLGE</sequence>
<accession>Q8R708</accession>
<keyword id="KW-1185">Reference proteome</keyword>
<dbReference type="EMBL" id="AE008691">
    <property type="protein sequence ID" value="AAM25741.1"/>
    <property type="molecule type" value="Genomic_DNA"/>
</dbReference>
<dbReference type="RefSeq" id="WP_011026616.1">
    <property type="nucleotide sequence ID" value="NC_003869.1"/>
</dbReference>
<dbReference type="SMR" id="Q8R708"/>
<dbReference type="STRING" id="273068.TTE2621"/>
<dbReference type="KEGG" id="tte:TTE2621"/>
<dbReference type="eggNOG" id="COG4492">
    <property type="taxonomic scope" value="Bacteria"/>
</dbReference>
<dbReference type="HOGENOM" id="CLU_128147_0_0_9"/>
<dbReference type="OrthoDB" id="9788773at2"/>
<dbReference type="Proteomes" id="UP000000555">
    <property type="component" value="Chromosome"/>
</dbReference>
<dbReference type="CDD" id="cd04888">
    <property type="entry name" value="ACT_PheB-BS"/>
    <property type="match status" value="1"/>
</dbReference>
<dbReference type="Gene3D" id="3.30.70.260">
    <property type="match status" value="1"/>
</dbReference>
<dbReference type="HAMAP" id="MF_00707">
    <property type="entry name" value="UPF0735"/>
    <property type="match status" value="1"/>
</dbReference>
<dbReference type="InterPro" id="IPR045865">
    <property type="entry name" value="ACT-like_dom_sf"/>
</dbReference>
<dbReference type="InterPro" id="IPR002912">
    <property type="entry name" value="ACT_dom"/>
</dbReference>
<dbReference type="InterPro" id="IPR008310">
    <property type="entry name" value="UPF0735_ACT_dom-cont"/>
</dbReference>
<dbReference type="NCBIfam" id="NF003361">
    <property type="entry name" value="PRK04435.1"/>
    <property type="match status" value="1"/>
</dbReference>
<dbReference type="PIRSF" id="PIRSF025624">
    <property type="entry name" value="ACT_PheB"/>
    <property type="match status" value="1"/>
</dbReference>
<dbReference type="SUPFAM" id="SSF55021">
    <property type="entry name" value="ACT-like"/>
    <property type="match status" value="1"/>
</dbReference>
<dbReference type="PROSITE" id="PS51671">
    <property type="entry name" value="ACT"/>
    <property type="match status" value="1"/>
</dbReference>
<reference key="1">
    <citation type="journal article" date="2002" name="Genome Res.">
        <title>A complete sequence of the T. tengcongensis genome.</title>
        <authorList>
            <person name="Bao Q."/>
            <person name="Tian Y."/>
            <person name="Li W."/>
            <person name="Xu Z."/>
            <person name="Xuan Z."/>
            <person name="Hu S."/>
            <person name="Dong W."/>
            <person name="Yang J."/>
            <person name="Chen Y."/>
            <person name="Xue Y."/>
            <person name="Xu Y."/>
            <person name="Lai X."/>
            <person name="Huang L."/>
            <person name="Dong X."/>
            <person name="Ma Y."/>
            <person name="Ling L."/>
            <person name="Tan H."/>
            <person name="Chen R."/>
            <person name="Wang J."/>
            <person name="Yu J."/>
            <person name="Yang H."/>
        </authorList>
    </citation>
    <scope>NUCLEOTIDE SEQUENCE [LARGE SCALE GENOMIC DNA]</scope>
    <source>
        <strain>DSM 15242 / JCM 11007 / NBRC 100824 / MB4</strain>
    </source>
</reference>
<organism>
    <name type="scientific">Caldanaerobacter subterraneus subsp. tengcongensis (strain DSM 15242 / JCM 11007 / NBRC 100824 / MB4)</name>
    <name type="common">Thermoanaerobacter tengcongensis</name>
    <dbReference type="NCBI Taxonomy" id="273068"/>
    <lineage>
        <taxon>Bacteria</taxon>
        <taxon>Bacillati</taxon>
        <taxon>Bacillota</taxon>
        <taxon>Clostridia</taxon>
        <taxon>Thermoanaerobacterales</taxon>
        <taxon>Thermoanaerobacteraceae</taxon>
        <taxon>Caldanaerobacter</taxon>
    </lineage>
</organism>
<feature type="chain" id="PRO_0000206482" description="UPF0735 ACT domain-containing protein TTE2621">
    <location>
        <begin position="1"/>
        <end position="146"/>
    </location>
</feature>
<feature type="domain" description="ACT" evidence="1">
    <location>
        <begin position="71"/>
        <end position="146"/>
    </location>
</feature>
<proteinExistence type="inferred from homology"/>
<name>Y2621_CALS4</name>
<gene>
    <name type="ordered locus">TTE2621</name>
</gene>
<evidence type="ECO:0000255" key="1">
    <source>
        <dbReference type="HAMAP-Rule" id="MF_00707"/>
    </source>
</evidence>
<protein>
    <recommendedName>
        <fullName evidence="1">UPF0735 ACT domain-containing protein TTE2621</fullName>
    </recommendedName>
</protein>